<keyword id="KW-0997">Cell inner membrane</keyword>
<keyword id="KW-1003">Cell membrane</keyword>
<keyword id="KW-0472">Membrane</keyword>
<keyword id="KW-1185">Reference proteome</keyword>
<reference key="1">
    <citation type="submission" date="2003-03" db="EMBL/GenBank/DDBJ databases">
        <title>The complete genome sequence of Neisseria gonorrhoeae.</title>
        <authorList>
            <person name="Lewis L.A."/>
            <person name="Gillaspy A.F."/>
            <person name="McLaughlin R.E."/>
            <person name="Gipson M."/>
            <person name="Ducey T.F."/>
            <person name="Ownbey T."/>
            <person name="Hartman K."/>
            <person name="Nydick C."/>
            <person name="Carson M.B."/>
            <person name="Vaughn J."/>
            <person name="Thomson C."/>
            <person name="Song L."/>
            <person name="Lin S."/>
            <person name="Yuan X."/>
            <person name="Najar F."/>
            <person name="Zhan M."/>
            <person name="Ren Q."/>
            <person name="Zhu H."/>
            <person name="Qi S."/>
            <person name="Kenton S.M."/>
            <person name="Lai H."/>
            <person name="White J.D."/>
            <person name="Clifton S."/>
            <person name="Roe B.A."/>
            <person name="Dyer D.W."/>
        </authorList>
    </citation>
    <scope>NUCLEOTIDE SEQUENCE [LARGE SCALE GENOMIC DNA]</scope>
    <source>
        <strain>ATCC 700825 / FA 1090</strain>
    </source>
</reference>
<protein>
    <recommendedName>
        <fullName evidence="1">Putative membrane protein insertion efficiency factor</fullName>
    </recommendedName>
</protein>
<sequence length="73" mass="8293">MNFLLSKLLLGLIRFYQYCISPLIPPRCRYTPTCSQYAVEAVKKYGAFKGLRLAIKRIARCHPFGGHGHDPVP</sequence>
<proteinExistence type="inferred from homology"/>
<name>YIDD_NEIG1</name>
<comment type="function">
    <text evidence="1">Could be involved in insertion of integral membrane proteins into the membrane.</text>
</comment>
<comment type="subcellular location">
    <subcellularLocation>
        <location evidence="1">Cell inner membrane</location>
        <topology evidence="1">Peripheral membrane protein</topology>
        <orientation evidence="1">Cytoplasmic side</orientation>
    </subcellularLocation>
</comment>
<comment type="similarity">
    <text evidence="1">Belongs to the UPF0161 family.</text>
</comment>
<organism>
    <name type="scientific">Neisseria gonorrhoeae (strain ATCC 700825 / FA 1090)</name>
    <dbReference type="NCBI Taxonomy" id="242231"/>
    <lineage>
        <taxon>Bacteria</taxon>
        <taxon>Pseudomonadati</taxon>
        <taxon>Pseudomonadota</taxon>
        <taxon>Betaproteobacteria</taxon>
        <taxon>Neisseriales</taxon>
        <taxon>Neisseriaceae</taxon>
        <taxon>Neisseria</taxon>
    </lineage>
</organism>
<feature type="chain" id="PRO_0000253129" description="Putative membrane protein insertion efficiency factor">
    <location>
        <begin position="1"/>
        <end position="73"/>
    </location>
</feature>
<accession>Q5F4W4</accession>
<gene>
    <name type="ordered locus">NGO_2180</name>
</gene>
<evidence type="ECO:0000255" key="1">
    <source>
        <dbReference type="HAMAP-Rule" id="MF_00386"/>
    </source>
</evidence>
<dbReference type="EMBL" id="AE004969">
    <property type="protein sequence ID" value="AAW90773.1"/>
    <property type="molecule type" value="Genomic_DNA"/>
</dbReference>
<dbReference type="RefSeq" id="YP_209185.1">
    <property type="nucleotide sequence ID" value="NC_002946.2"/>
</dbReference>
<dbReference type="STRING" id="242231.NGO_2180"/>
<dbReference type="KEGG" id="ngo:NGO_2180"/>
<dbReference type="PATRIC" id="fig|242231.10.peg.2633"/>
<dbReference type="HOGENOM" id="CLU_144811_6_1_4"/>
<dbReference type="Proteomes" id="UP000000535">
    <property type="component" value="Chromosome"/>
</dbReference>
<dbReference type="GO" id="GO:0005886">
    <property type="term" value="C:plasma membrane"/>
    <property type="evidence" value="ECO:0007669"/>
    <property type="project" value="UniProtKB-SubCell"/>
</dbReference>
<dbReference type="HAMAP" id="MF_00386">
    <property type="entry name" value="UPF0161_YidD"/>
    <property type="match status" value="1"/>
</dbReference>
<dbReference type="InterPro" id="IPR002696">
    <property type="entry name" value="Membr_insert_effic_factor_YidD"/>
</dbReference>
<dbReference type="NCBIfam" id="TIGR00278">
    <property type="entry name" value="membrane protein insertion efficiency factor YidD"/>
    <property type="match status" value="1"/>
</dbReference>
<dbReference type="PANTHER" id="PTHR33383">
    <property type="entry name" value="MEMBRANE PROTEIN INSERTION EFFICIENCY FACTOR-RELATED"/>
    <property type="match status" value="1"/>
</dbReference>
<dbReference type="PANTHER" id="PTHR33383:SF1">
    <property type="entry name" value="MEMBRANE PROTEIN INSERTION EFFICIENCY FACTOR-RELATED"/>
    <property type="match status" value="1"/>
</dbReference>
<dbReference type="Pfam" id="PF01809">
    <property type="entry name" value="YidD"/>
    <property type="match status" value="1"/>
</dbReference>
<dbReference type="SMART" id="SM01234">
    <property type="entry name" value="Haemolytic"/>
    <property type="match status" value="1"/>
</dbReference>